<sequence>MSRIGNKVIVLPAGVEISNKDNVVTVKGPKGELTREFSKDIEIRVEGTEVTLHRPNDSKEMKTIHGTTRALLNNMVVGVSEGFKKELEMRGVGYRAQLQGKKLVLSVGKSHPDEVEAPEGITFELPNPTTIVVSGISKEVVGQTAAYVRSLRAPEPYKGKGIRYVGEFVRRKEGKTGK</sequence>
<feature type="chain" id="PRO_1000055318" description="Large ribosomal subunit protein uL6">
    <location>
        <begin position="1"/>
        <end position="178"/>
    </location>
</feature>
<dbReference type="EMBL" id="CP000387">
    <property type="protein sequence ID" value="ABN43584.1"/>
    <property type="molecule type" value="Genomic_DNA"/>
</dbReference>
<dbReference type="RefSeq" id="WP_002894503.1">
    <property type="nucleotide sequence ID" value="NC_009009.1"/>
</dbReference>
<dbReference type="RefSeq" id="YP_001034134.1">
    <property type="nucleotide sequence ID" value="NC_009009.1"/>
</dbReference>
<dbReference type="SMR" id="A3CK79"/>
<dbReference type="STRING" id="388919.SSA_0122"/>
<dbReference type="KEGG" id="ssa:SSA_0122"/>
<dbReference type="PATRIC" id="fig|388919.9.peg.116"/>
<dbReference type="eggNOG" id="COG0097">
    <property type="taxonomic scope" value="Bacteria"/>
</dbReference>
<dbReference type="HOGENOM" id="CLU_065464_1_2_9"/>
<dbReference type="OrthoDB" id="9805007at2"/>
<dbReference type="Proteomes" id="UP000002148">
    <property type="component" value="Chromosome"/>
</dbReference>
<dbReference type="GO" id="GO:0022625">
    <property type="term" value="C:cytosolic large ribosomal subunit"/>
    <property type="evidence" value="ECO:0007669"/>
    <property type="project" value="TreeGrafter"/>
</dbReference>
<dbReference type="GO" id="GO:0019843">
    <property type="term" value="F:rRNA binding"/>
    <property type="evidence" value="ECO:0007669"/>
    <property type="project" value="UniProtKB-UniRule"/>
</dbReference>
<dbReference type="GO" id="GO:0003735">
    <property type="term" value="F:structural constituent of ribosome"/>
    <property type="evidence" value="ECO:0007669"/>
    <property type="project" value="InterPro"/>
</dbReference>
<dbReference type="GO" id="GO:0002181">
    <property type="term" value="P:cytoplasmic translation"/>
    <property type="evidence" value="ECO:0007669"/>
    <property type="project" value="TreeGrafter"/>
</dbReference>
<dbReference type="FunFam" id="3.90.930.12:FF:000001">
    <property type="entry name" value="50S ribosomal protein L6"/>
    <property type="match status" value="1"/>
</dbReference>
<dbReference type="FunFam" id="3.90.930.12:FF:000002">
    <property type="entry name" value="50S ribosomal protein L6"/>
    <property type="match status" value="1"/>
</dbReference>
<dbReference type="Gene3D" id="3.90.930.12">
    <property type="entry name" value="Ribosomal protein L6, alpha-beta domain"/>
    <property type="match status" value="2"/>
</dbReference>
<dbReference type="HAMAP" id="MF_01365_B">
    <property type="entry name" value="Ribosomal_uL6_B"/>
    <property type="match status" value="1"/>
</dbReference>
<dbReference type="InterPro" id="IPR000702">
    <property type="entry name" value="Ribosomal_uL6-like"/>
</dbReference>
<dbReference type="InterPro" id="IPR036789">
    <property type="entry name" value="Ribosomal_uL6-like_a/b-dom_sf"/>
</dbReference>
<dbReference type="InterPro" id="IPR020040">
    <property type="entry name" value="Ribosomal_uL6_a/b-dom"/>
</dbReference>
<dbReference type="InterPro" id="IPR019906">
    <property type="entry name" value="Ribosomal_uL6_bac-type"/>
</dbReference>
<dbReference type="InterPro" id="IPR002358">
    <property type="entry name" value="Ribosomal_uL6_CS"/>
</dbReference>
<dbReference type="NCBIfam" id="TIGR03654">
    <property type="entry name" value="L6_bact"/>
    <property type="match status" value="1"/>
</dbReference>
<dbReference type="PANTHER" id="PTHR11655">
    <property type="entry name" value="60S/50S RIBOSOMAL PROTEIN L6/L9"/>
    <property type="match status" value="1"/>
</dbReference>
<dbReference type="PANTHER" id="PTHR11655:SF14">
    <property type="entry name" value="LARGE RIBOSOMAL SUBUNIT PROTEIN UL6M"/>
    <property type="match status" value="1"/>
</dbReference>
<dbReference type="Pfam" id="PF00347">
    <property type="entry name" value="Ribosomal_L6"/>
    <property type="match status" value="2"/>
</dbReference>
<dbReference type="PIRSF" id="PIRSF002162">
    <property type="entry name" value="Ribosomal_L6"/>
    <property type="match status" value="1"/>
</dbReference>
<dbReference type="PRINTS" id="PR00059">
    <property type="entry name" value="RIBOSOMALL6"/>
</dbReference>
<dbReference type="SUPFAM" id="SSF56053">
    <property type="entry name" value="Ribosomal protein L6"/>
    <property type="match status" value="2"/>
</dbReference>
<dbReference type="PROSITE" id="PS00525">
    <property type="entry name" value="RIBOSOMAL_L6_1"/>
    <property type="match status" value="1"/>
</dbReference>
<protein>
    <recommendedName>
        <fullName evidence="1">Large ribosomal subunit protein uL6</fullName>
    </recommendedName>
    <alternativeName>
        <fullName evidence="2">50S ribosomal protein L6</fullName>
    </alternativeName>
</protein>
<organism>
    <name type="scientific">Streptococcus sanguinis (strain SK36)</name>
    <dbReference type="NCBI Taxonomy" id="388919"/>
    <lineage>
        <taxon>Bacteria</taxon>
        <taxon>Bacillati</taxon>
        <taxon>Bacillota</taxon>
        <taxon>Bacilli</taxon>
        <taxon>Lactobacillales</taxon>
        <taxon>Streptococcaceae</taxon>
        <taxon>Streptococcus</taxon>
    </lineage>
</organism>
<reference key="1">
    <citation type="journal article" date="2007" name="J. Bacteriol.">
        <title>Genome of the opportunistic pathogen Streptococcus sanguinis.</title>
        <authorList>
            <person name="Xu P."/>
            <person name="Alves J.M."/>
            <person name="Kitten T."/>
            <person name="Brown A."/>
            <person name="Chen Z."/>
            <person name="Ozaki L.S."/>
            <person name="Manque P."/>
            <person name="Ge X."/>
            <person name="Serrano M.G."/>
            <person name="Puiu D."/>
            <person name="Hendricks S."/>
            <person name="Wang Y."/>
            <person name="Chaplin M.D."/>
            <person name="Akan D."/>
            <person name="Paik S."/>
            <person name="Peterson D.L."/>
            <person name="Macrina F.L."/>
            <person name="Buck G.A."/>
        </authorList>
    </citation>
    <scope>NUCLEOTIDE SEQUENCE [LARGE SCALE GENOMIC DNA]</scope>
    <source>
        <strain>SK36</strain>
    </source>
</reference>
<name>RL6_STRSV</name>
<comment type="function">
    <text evidence="1">This protein binds to the 23S rRNA, and is important in its secondary structure. It is located near the subunit interface in the base of the L7/L12 stalk, and near the tRNA binding site of the peptidyltransferase center.</text>
</comment>
<comment type="subunit">
    <text evidence="1">Part of the 50S ribosomal subunit.</text>
</comment>
<comment type="similarity">
    <text evidence="1">Belongs to the universal ribosomal protein uL6 family.</text>
</comment>
<gene>
    <name evidence="1" type="primary">rplF</name>
    <name type="ordered locus">SSA_0122</name>
</gene>
<keyword id="KW-1185">Reference proteome</keyword>
<keyword id="KW-0687">Ribonucleoprotein</keyword>
<keyword id="KW-0689">Ribosomal protein</keyword>
<keyword id="KW-0694">RNA-binding</keyword>
<keyword id="KW-0699">rRNA-binding</keyword>
<evidence type="ECO:0000255" key="1">
    <source>
        <dbReference type="HAMAP-Rule" id="MF_01365"/>
    </source>
</evidence>
<evidence type="ECO:0000305" key="2"/>
<accession>A3CK79</accession>
<proteinExistence type="inferred from homology"/>